<feature type="chain" id="PRO_1000186421" description="Bifunctional protein GlmU">
    <location>
        <begin position="1"/>
        <end position="429"/>
    </location>
</feature>
<feature type="region of interest" description="Pyrophosphorylase" evidence="1">
    <location>
        <begin position="1"/>
        <end position="223"/>
    </location>
</feature>
<feature type="region of interest" description="Linker" evidence="1">
    <location>
        <begin position="224"/>
        <end position="244"/>
    </location>
</feature>
<feature type="region of interest" description="N-acetyltransferase" evidence="1">
    <location>
        <begin position="245"/>
        <end position="429"/>
    </location>
</feature>
<feature type="active site" description="Proton acceptor" evidence="1">
    <location>
        <position position="336"/>
    </location>
</feature>
<feature type="binding site" evidence="1">
    <location>
        <begin position="8"/>
        <end position="11"/>
    </location>
    <ligand>
        <name>UDP-N-acetyl-alpha-D-glucosamine</name>
        <dbReference type="ChEBI" id="CHEBI:57705"/>
    </ligand>
</feature>
<feature type="binding site" evidence="1">
    <location>
        <position position="22"/>
    </location>
    <ligand>
        <name>UDP-N-acetyl-alpha-D-glucosamine</name>
        <dbReference type="ChEBI" id="CHEBI:57705"/>
    </ligand>
</feature>
<feature type="binding site" evidence="1">
    <location>
        <position position="74"/>
    </location>
    <ligand>
        <name>UDP-N-acetyl-alpha-D-glucosamine</name>
        <dbReference type="ChEBI" id="CHEBI:57705"/>
    </ligand>
</feature>
<feature type="binding site" evidence="1">
    <location>
        <begin position="81"/>
        <end position="82"/>
    </location>
    <ligand>
        <name>UDP-N-acetyl-alpha-D-glucosamine</name>
        <dbReference type="ChEBI" id="CHEBI:57705"/>
    </ligand>
</feature>
<feature type="binding site" evidence="1">
    <location>
        <position position="102"/>
    </location>
    <ligand>
        <name>Mg(2+)</name>
        <dbReference type="ChEBI" id="CHEBI:18420"/>
    </ligand>
</feature>
<feature type="binding site" evidence="1">
    <location>
        <position position="135"/>
    </location>
    <ligand>
        <name>UDP-N-acetyl-alpha-D-glucosamine</name>
        <dbReference type="ChEBI" id="CHEBI:57705"/>
    </ligand>
</feature>
<feature type="binding site" evidence="1">
    <location>
        <position position="149"/>
    </location>
    <ligand>
        <name>UDP-N-acetyl-alpha-D-glucosamine</name>
        <dbReference type="ChEBI" id="CHEBI:57705"/>
    </ligand>
</feature>
<feature type="binding site" evidence="1">
    <location>
        <position position="164"/>
    </location>
    <ligand>
        <name>UDP-N-acetyl-alpha-D-glucosamine</name>
        <dbReference type="ChEBI" id="CHEBI:57705"/>
    </ligand>
</feature>
<feature type="binding site" evidence="1">
    <location>
        <position position="221"/>
    </location>
    <ligand>
        <name>Mg(2+)</name>
        <dbReference type="ChEBI" id="CHEBI:18420"/>
    </ligand>
</feature>
<feature type="binding site" evidence="1">
    <location>
        <position position="221"/>
    </location>
    <ligand>
        <name>UDP-N-acetyl-alpha-D-glucosamine</name>
        <dbReference type="ChEBI" id="CHEBI:57705"/>
    </ligand>
</feature>
<feature type="binding site" evidence="1">
    <location>
        <position position="308"/>
    </location>
    <ligand>
        <name>UDP-N-acetyl-alpha-D-glucosamine</name>
        <dbReference type="ChEBI" id="CHEBI:57705"/>
    </ligand>
</feature>
<feature type="binding site" evidence="1">
    <location>
        <position position="325"/>
    </location>
    <ligand>
        <name>UDP-N-acetyl-alpha-D-glucosamine</name>
        <dbReference type="ChEBI" id="CHEBI:57705"/>
    </ligand>
</feature>
<feature type="binding site" evidence="1">
    <location>
        <position position="339"/>
    </location>
    <ligand>
        <name>UDP-N-acetyl-alpha-D-glucosamine</name>
        <dbReference type="ChEBI" id="CHEBI:57705"/>
    </ligand>
</feature>
<feature type="binding site" evidence="1">
    <location>
        <position position="350"/>
    </location>
    <ligand>
        <name>UDP-N-acetyl-alpha-D-glucosamine</name>
        <dbReference type="ChEBI" id="CHEBI:57705"/>
    </ligand>
</feature>
<feature type="binding site" evidence="1">
    <location>
        <begin position="359"/>
        <end position="360"/>
    </location>
    <ligand>
        <name>acetyl-CoA</name>
        <dbReference type="ChEBI" id="CHEBI:57288"/>
    </ligand>
</feature>
<feature type="binding site" evidence="1">
    <location>
        <position position="378"/>
    </location>
    <ligand>
        <name>acetyl-CoA</name>
        <dbReference type="ChEBI" id="CHEBI:57288"/>
    </ligand>
</feature>
<feature type="binding site" evidence="1">
    <location>
        <position position="396"/>
    </location>
    <ligand>
        <name>acetyl-CoA</name>
        <dbReference type="ChEBI" id="CHEBI:57288"/>
    </ligand>
</feature>
<feature type="binding site" evidence="1">
    <location>
        <position position="413"/>
    </location>
    <ligand>
        <name>acetyl-CoA</name>
        <dbReference type="ChEBI" id="CHEBI:57288"/>
    </ligand>
</feature>
<keyword id="KW-0012">Acyltransferase</keyword>
<keyword id="KW-0133">Cell shape</keyword>
<keyword id="KW-0961">Cell wall biogenesis/degradation</keyword>
<keyword id="KW-0963">Cytoplasm</keyword>
<keyword id="KW-0460">Magnesium</keyword>
<keyword id="KW-0479">Metal-binding</keyword>
<keyword id="KW-0511">Multifunctional enzyme</keyword>
<keyword id="KW-0548">Nucleotidyltransferase</keyword>
<keyword id="KW-0573">Peptidoglycan synthesis</keyword>
<keyword id="KW-1185">Reference proteome</keyword>
<keyword id="KW-0677">Repeat</keyword>
<keyword id="KW-0808">Transferase</keyword>
<sequence length="429" mass="47976">MKISVLILAAGLGTRMKSQNPKVLQKICSKAMILHILKQAYKISDDVCVVLSHQKEKVEQVILEHFPNTRFLEQDLQNFPGTAGALRGYESKHEKVLILCGDMPLVKADDLEKIALNESDFNVAVFKAKDPKSYGRIVLKENKIQKIVETKDANKEELAINICNSGVYAIKAQILKEVLPLIKNDNKAKEYYLTDAVYLAKEKGYEIDAVFVNEQDFMGVNDKIELCLAQDLMQEAIKKEWMKQGVIFHMPATTFISDEVEFVGECEVYENVRIEGKSKIINSIIKSSSVIEDSIVENSDVGPLAHLRPKCQLKNTHIGNFVECKNALLNGVKAGHLSYLGDCEIDEGSNIGCGTITCNYDGVKKHKTKIGKNVFVGSDTQFIAPVNIEDEVIIAAGSCVNKDVKKGSLFINRAKEEIIKDYFYTKFKK</sequence>
<evidence type="ECO:0000255" key="1">
    <source>
        <dbReference type="HAMAP-Rule" id="MF_01631"/>
    </source>
</evidence>
<comment type="function">
    <text evidence="1">Catalyzes the last two sequential reactions in the de novo biosynthetic pathway for UDP-N-acetylglucosamine (UDP-GlcNAc). The C-terminal domain catalyzes the transfer of acetyl group from acetyl coenzyme A to glucosamine-1-phosphate (GlcN-1-P) to produce N-acetylglucosamine-1-phosphate (GlcNAc-1-P), which is converted into UDP-GlcNAc by the transfer of uridine 5-monophosphate (from uridine 5-triphosphate), a reaction catalyzed by the N-terminal domain.</text>
</comment>
<comment type="catalytic activity">
    <reaction evidence="1">
        <text>alpha-D-glucosamine 1-phosphate + acetyl-CoA = N-acetyl-alpha-D-glucosamine 1-phosphate + CoA + H(+)</text>
        <dbReference type="Rhea" id="RHEA:13725"/>
        <dbReference type="ChEBI" id="CHEBI:15378"/>
        <dbReference type="ChEBI" id="CHEBI:57287"/>
        <dbReference type="ChEBI" id="CHEBI:57288"/>
        <dbReference type="ChEBI" id="CHEBI:57776"/>
        <dbReference type="ChEBI" id="CHEBI:58516"/>
        <dbReference type="EC" id="2.3.1.157"/>
    </reaction>
</comment>
<comment type="catalytic activity">
    <reaction evidence="1">
        <text>N-acetyl-alpha-D-glucosamine 1-phosphate + UTP + H(+) = UDP-N-acetyl-alpha-D-glucosamine + diphosphate</text>
        <dbReference type="Rhea" id="RHEA:13509"/>
        <dbReference type="ChEBI" id="CHEBI:15378"/>
        <dbReference type="ChEBI" id="CHEBI:33019"/>
        <dbReference type="ChEBI" id="CHEBI:46398"/>
        <dbReference type="ChEBI" id="CHEBI:57705"/>
        <dbReference type="ChEBI" id="CHEBI:57776"/>
        <dbReference type="EC" id="2.7.7.23"/>
    </reaction>
</comment>
<comment type="cofactor">
    <cofactor evidence="1">
        <name>Mg(2+)</name>
        <dbReference type="ChEBI" id="CHEBI:18420"/>
    </cofactor>
    <text evidence="1">Binds 1 Mg(2+) ion per subunit.</text>
</comment>
<comment type="pathway">
    <text evidence="1">Nucleotide-sugar biosynthesis; UDP-N-acetyl-alpha-D-glucosamine biosynthesis; N-acetyl-alpha-D-glucosamine 1-phosphate from alpha-D-glucosamine 6-phosphate (route II): step 2/2.</text>
</comment>
<comment type="pathway">
    <text evidence="1">Nucleotide-sugar biosynthesis; UDP-N-acetyl-alpha-D-glucosamine biosynthesis; UDP-N-acetyl-alpha-D-glucosamine from N-acetyl-alpha-D-glucosamine 1-phosphate: step 1/1.</text>
</comment>
<comment type="pathway">
    <text evidence="1">Bacterial outer membrane biogenesis; LPS lipid A biosynthesis.</text>
</comment>
<comment type="subunit">
    <text evidence="1">Homotrimer.</text>
</comment>
<comment type="subcellular location">
    <subcellularLocation>
        <location evidence="1">Cytoplasm</location>
    </subcellularLocation>
</comment>
<comment type="similarity">
    <text evidence="1">In the N-terminal section; belongs to the N-acetylglucosamine-1-phosphate uridyltransferase family.</text>
</comment>
<comment type="similarity">
    <text evidence="1">In the C-terminal section; belongs to the transferase hexapeptide repeat family.</text>
</comment>
<gene>
    <name evidence="1" type="primary">glmU</name>
    <name type="ordered locus">Cla_0981</name>
</gene>
<reference key="1">
    <citation type="journal article" date="2008" name="Foodborne Pathog. Dis.">
        <title>The complete genome sequence and analysis of the human pathogen Campylobacter lari.</title>
        <authorList>
            <person name="Miller W.G."/>
            <person name="Wang G."/>
            <person name="Binnewies T.T."/>
            <person name="Parker C.T."/>
        </authorList>
    </citation>
    <scope>NUCLEOTIDE SEQUENCE [LARGE SCALE GENOMIC DNA]</scope>
    <source>
        <strain>RM2100 / D67 / ATCC BAA-1060</strain>
    </source>
</reference>
<name>GLMU_CAMLR</name>
<accession>B9KCL5</accession>
<organism>
    <name type="scientific">Campylobacter lari (strain RM2100 / D67 / ATCC BAA-1060)</name>
    <dbReference type="NCBI Taxonomy" id="306263"/>
    <lineage>
        <taxon>Bacteria</taxon>
        <taxon>Pseudomonadati</taxon>
        <taxon>Campylobacterota</taxon>
        <taxon>Epsilonproteobacteria</taxon>
        <taxon>Campylobacterales</taxon>
        <taxon>Campylobacteraceae</taxon>
        <taxon>Campylobacter</taxon>
    </lineage>
</organism>
<proteinExistence type="inferred from homology"/>
<protein>
    <recommendedName>
        <fullName evidence="1">Bifunctional protein GlmU</fullName>
    </recommendedName>
    <domain>
        <recommendedName>
            <fullName evidence="1">UDP-N-acetylglucosamine pyrophosphorylase</fullName>
            <ecNumber evidence="1">2.7.7.23</ecNumber>
        </recommendedName>
        <alternativeName>
            <fullName evidence="1">N-acetylglucosamine-1-phosphate uridyltransferase</fullName>
        </alternativeName>
    </domain>
    <domain>
        <recommendedName>
            <fullName evidence="1">Glucosamine-1-phosphate N-acetyltransferase</fullName>
            <ecNumber evidence="1">2.3.1.157</ecNumber>
        </recommendedName>
    </domain>
</protein>
<dbReference type="EC" id="2.7.7.23" evidence="1"/>
<dbReference type="EC" id="2.3.1.157" evidence="1"/>
<dbReference type="EMBL" id="CP000932">
    <property type="protein sequence ID" value="ACM64304.1"/>
    <property type="molecule type" value="Genomic_DNA"/>
</dbReference>
<dbReference type="RefSeq" id="WP_012661687.1">
    <property type="nucleotide sequence ID" value="NC_012039.1"/>
</dbReference>
<dbReference type="SMR" id="B9KCL5"/>
<dbReference type="STRING" id="306263.Cla_0981"/>
<dbReference type="KEGG" id="cla:CLA_0981"/>
<dbReference type="PATRIC" id="fig|306263.5.peg.965"/>
<dbReference type="eggNOG" id="COG1207">
    <property type="taxonomic scope" value="Bacteria"/>
</dbReference>
<dbReference type="HOGENOM" id="CLU_029499_15_2_7"/>
<dbReference type="UniPathway" id="UPA00113">
    <property type="reaction ID" value="UER00532"/>
</dbReference>
<dbReference type="UniPathway" id="UPA00113">
    <property type="reaction ID" value="UER00533"/>
</dbReference>
<dbReference type="UniPathway" id="UPA00973"/>
<dbReference type="Proteomes" id="UP000007727">
    <property type="component" value="Chromosome"/>
</dbReference>
<dbReference type="GO" id="GO:0005737">
    <property type="term" value="C:cytoplasm"/>
    <property type="evidence" value="ECO:0007669"/>
    <property type="project" value="UniProtKB-SubCell"/>
</dbReference>
<dbReference type="GO" id="GO:0016020">
    <property type="term" value="C:membrane"/>
    <property type="evidence" value="ECO:0007669"/>
    <property type="project" value="GOC"/>
</dbReference>
<dbReference type="GO" id="GO:0019134">
    <property type="term" value="F:glucosamine-1-phosphate N-acetyltransferase activity"/>
    <property type="evidence" value="ECO:0007669"/>
    <property type="project" value="UniProtKB-UniRule"/>
</dbReference>
<dbReference type="GO" id="GO:0000287">
    <property type="term" value="F:magnesium ion binding"/>
    <property type="evidence" value="ECO:0007669"/>
    <property type="project" value="UniProtKB-UniRule"/>
</dbReference>
<dbReference type="GO" id="GO:0003977">
    <property type="term" value="F:UDP-N-acetylglucosamine diphosphorylase activity"/>
    <property type="evidence" value="ECO:0007669"/>
    <property type="project" value="UniProtKB-UniRule"/>
</dbReference>
<dbReference type="GO" id="GO:0000902">
    <property type="term" value="P:cell morphogenesis"/>
    <property type="evidence" value="ECO:0007669"/>
    <property type="project" value="UniProtKB-UniRule"/>
</dbReference>
<dbReference type="GO" id="GO:0071555">
    <property type="term" value="P:cell wall organization"/>
    <property type="evidence" value="ECO:0007669"/>
    <property type="project" value="UniProtKB-KW"/>
</dbReference>
<dbReference type="GO" id="GO:0009245">
    <property type="term" value="P:lipid A biosynthetic process"/>
    <property type="evidence" value="ECO:0007669"/>
    <property type="project" value="UniProtKB-UniRule"/>
</dbReference>
<dbReference type="GO" id="GO:0009252">
    <property type="term" value="P:peptidoglycan biosynthetic process"/>
    <property type="evidence" value="ECO:0007669"/>
    <property type="project" value="UniProtKB-UniRule"/>
</dbReference>
<dbReference type="GO" id="GO:0008360">
    <property type="term" value="P:regulation of cell shape"/>
    <property type="evidence" value="ECO:0007669"/>
    <property type="project" value="UniProtKB-KW"/>
</dbReference>
<dbReference type="GO" id="GO:0006048">
    <property type="term" value="P:UDP-N-acetylglucosamine biosynthetic process"/>
    <property type="evidence" value="ECO:0007669"/>
    <property type="project" value="UniProtKB-UniPathway"/>
</dbReference>
<dbReference type="CDD" id="cd02540">
    <property type="entry name" value="GT2_GlmU_N_bac"/>
    <property type="match status" value="1"/>
</dbReference>
<dbReference type="Gene3D" id="2.160.10.10">
    <property type="entry name" value="Hexapeptide repeat proteins"/>
    <property type="match status" value="1"/>
</dbReference>
<dbReference type="Gene3D" id="3.90.550.10">
    <property type="entry name" value="Spore Coat Polysaccharide Biosynthesis Protein SpsA, Chain A"/>
    <property type="match status" value="1"/>
</dbReference>
<dbReference type="HAMAP" id="MF_01631">
    <property type="entry name" value="GlmU"/>
    <property type="match status" value="1"/>
</dbReference>
<dbReference type="InterPro" id="IPR005882">
    <property type="entry name" value="Bifunctional_GlmU"/>
</dbReference>
<dbReference type="InterPro" id="IPR050065">
    <property type="entry name" value="GlmU-like"/>
</dbReference>
<dbReference type="InterPro" id="IPR001451">
    <property type="entry name" value="Hexapep"/>
</dbReference>
<dbReference type="InterPro" id="IPR025877">
    <property type="entry name" value="MobA-like_NTP_Trfase"/>
</dbReference>
<dbReference type="InterPro" id="IPR029044">
    <property type="entry name" value="Nucleotide-diphossugar_trans"/>
</dbReference>
<dbReference type="InterPro" id="IPR011004">
    <property type="entry name" value="Trimer_LpxA-like_sf"/>
</dbReference>
<dbReference type="NCBIfam" id="TIGR01173">
    <property type="entry name" value="glmU"/>
    <property type="match status" value="1"/>
</dbReference>
<dbReference type="NCBIfam" id="NF010939">
    <property type="entry name" value="PRK14359.1"/>
    <property type="match status" value="1"/>
</dbReference>
<dbReference type="PANTHER" id="PTHR43584:SF3">
    <property type="entry name" value="BIFUNCTIONAL PROTEIN GLMU"/>
    <property type="match status" value="1"/>
</dbReference>
<dbReference type="PANTHER" id="PTHR43584">
    <property type="entry name" value="NUCLEOTIDYL TRANSFERASE"/>
    <property type="match status" value="1"/>
</dbReference>
<dbReference type="Pfam" id="PF00132">
    <property type="entry name" value="Hexapep"/>
    <property type="match status" value="1"/>
</dbReference>
<dbReference type="Pfam" id="PF12804">
    <property type="entry name" value="NTP_transf_3"/>
    <property type="match status" value="1"/>
</dbReference>
<dbReference type="SUPFAM" id="SSF53448">
    <property type="entry name" value="Nucleotide-diphospho-sugar transferases"/>
    <property type="match status" value="1"/>
</dbReference>
<dbReference type="SUPFAM" id="SSF51161">
    <property type="entry name" value="Trimeric LpxA-like enzymes"/>
    <property type="match status" value="1"/>
</dbReference>